<name>RLMH_CERSK</name>
<comment type="function">
    <text evidence="1">Specifically methylates the pseudouridine at position 1915 (m3Psi1915) in 23S rRNA.</text>
</comment>
<comment type="catalytic activity">
    <reaction evidence="1">
        <text>pseudouridine(1915) in 23S rRNA + S-adenosyl-L-methionine = N(3)-methylpseudouridine(1915) in 23S rRNA + S-adenosyl-L-homocysteine + H(+)</text>
        <dbReference type="Rhea" id="RHEA:42752"/>
        <dbReference type="Rhea" id="RHEA-COMP:10221"/>
        <dbReference type="Rhea" id="RHEA-COMP:10222"/>
        <dbReference type="ChEBI" id="CHEBI:15378"/>
        <dbReference type="ChEBI" id="CHEBI:57856"/>
        <dbReference type="ChEBI" id="CHEBI:59789"/>
        <dbReference type="ChEBI" id="CHEBI:65314"/>
        <dbReference type="ChEBI" id="CHEBI:74486"/>
        <dbReference type="EC" id="2.1.1.177"/>
    </reaction>
</comment>
<comment type="subunit">
    <text evidence="1">Homodimer.</text>
</comment>
<comment type="subcellular location">
    <subcellularLocation>
        <location evidence="1">Cytoplasm</location>
    </subcellularLocation>
</comment>
<comment type="similarity">
    <text evidence="1">Belongs to the RNA methyltransferase RlmH family.</text>
</comment>
<keyword id="KW-0963">Cytoplasm</keyword>
<keyword id="KW-0489">Methyltransferase</keyword>
<keyword id="KW-0698">rRNA processing</keyword>
<keyword id="KW-0949">S-adenosyl-L-methionine</keyword>
<keyword id="KW-0808">Transferase</keyword>
<feature type="chain" id="PRO_1000199826" description="Ribosomal RNA large subunit methyltransferase H">
    <location>
        <begin position="1"/>
        <end position="155"/>
    </location>
</feature>
<feature type="binding site" evidence="1">
    <location>
        <position position="72"/>
    </location>
    <ligand>
        <name>S-adenosyl-L-methionine</name>
        <dbReference type="ChEBI" id="CHEBI:59789"/>
    </ligand>
</feature>
<feature type="binding site" evidence="1">
    <location>
        <position position="103"/>
    </location>
    <ligand>
        <name>S-adenosyl-L-methionine</name>
        <dbReference type="ChEBI" id="CHEBI:59789"/>
    </ligand>
</feature>
<feature type="binding site" evidence="1">
    <location>
        <begin position="122"/>
        <end position="127"/>
    </location>
    <ligand>
        <name>S-adenosyl-L-methionine</name>
        <dbReference type="ChEBI" id="CHEBI:59789"/>
    </ligand>
</feature>
<organism>
    <name type="scientific">Cereibacter sphaeroides (strain KD131 / KCTC 12085)</name>
    <name type="common">Rhodobacter sphaeroides</name>
    <dbReference type="NCBI Taxonomy" id="557760"/>
    <lineage>
        <taxon>Bacteria</taxon>
        <taxon>Pseudomonadati</taxon>
        <taxon>Pseudomonadota</taxon>
        <taxon>Alphaproteobacteria</taxon>
        <taxon>Rhodobacterales</taxon>
        <taxon>Paracoccaceae</taxon>
        <taxon>Cereibacter</taxon>
    </lineage>
</organism>
<proteinExistence type="inferred from homology"/>
<evidence type="ECO:0000255" key="1">
    <source>
        <dbReference type="HAMAP-Rule" id="MF_00658"/>
    </source>
</evidence>
<protein>
    <recommendedName>
        <fullName evidence="1">Ribosomal RNA large subunit methyltransferase H</fullName>
        <ecNumber evidence="1">2.1.1.177</ecNumber>
    </recommendedName>
    <alternativeName>
        <fullName evidence="1">23S rRNA (pseudouridine1915-N3)-methyltransferase</fullName>
    </alternativeName>
    <alternativeName>
        <fullName evidence="1">23S rRNA m3Psi1915 methyltransferase</fullName>
    </alternativeName>
    <alternativeName>
        <fullName evidence="1">rRNA (pseudouridine-N3-)-methyltransferase RlmH</fullName>
    </alternativeName>
</protein>
<sequence>MKLQLCAVGRLRSGPERDLVEDYLARFERTGRPLGLPAVQLLELEDRKGGGMEAEADLIAKAVAPGAALVVLDERGRTLSSPEFADHLAHWRDSGRDVALAIGGADGLAPRLRDRADLAISLGRMVWPHMLVRVMLAEQLYRAATILAGSPYHRV</sequence>
<reference key="1">
    <citation type="journal article" date="2009" name="J. Bacteriol.">
        <title>Complete genome sequence of Rhodobacter sphaeroides KD131.</title>
        <authorList>
            <person name="Lim S.-K."/>
            <person name="Kim S.J."/>
            <person name="Cha S.H."/>
            <person name="Oh Y.-K."/>
            <person name="Rhee H.-J."/>
            <person name="Kim M.-S."/>
            <person name="Lee J.K."/>
        </authorList>
    </citation>
    <scope>NUCLEOTIDE SEQUENCE [LARGE SCALE GENOMIC DNA]</scope>
    <source>
        <strain>KD131 / KCTC 12085</strain>
    </source>
</reference>
<gene>
    <name evidence="1" type="primary">rlmH</name>
    <name type="ordered locus">RSKD131_2239</name>
</gene>
<dbReference type="EC" id="2.1.1.177" evidence="1"/>
<dbReference type="EMBL" id="CP001150">
    <property type="protein sequence ID" value="ACM02099.1"/>
    <property type="molecule type" value="Genomic_DNA"/>
</dbReference>
<dbReference type="RefSeq" id="WP_015921287.1">
    <property type="nucleotide sequence ID" value="NC_011963.1"/>
</dbReference>
<dbReference type="SMR" id="B9KMK8"/>
<dbReference type="GeneID" id="67447622"/>
<dbReference type="KEGG" id="rsk:RSKD131_2239"/>
<dbReference type="HOGENOM" id="CLU_100552_1_1_5"/>
<dbReference type="GO" id="GO:0005737">
    <property type="term" value="C:cytoplasm"/>
    <property type="evidence" value="ECO:0007669"/>
    <property type="project" value="UniProtKB-SubCell"/>
</dbReference>
<dbReference type="GO" id="GO:0070038">
    <property type="term" value="F:rRNA (pseudouridine-N3-)-methyltransferase activity"/>
    <property type="evidence" value="ECO:0007669"/>
    <property type="project" value="UniProtKB-UniRule"/>
</dbReference>
<dbReference type="CDD" id="cd18081">
    <property type="entry name" value="RlmH-like"/>
    <property type="match status" value="1"/>
</dbReference>
<dbReference type="Gene3D" id="3.40.1280.10">
    <property type="match status" value="1"/>
</dbReference>
<dbReference type="HAMAP" id="MF_00658">
    <property type="entry name" value="23SrRNA_methyltr_H"/>
    <property type="match status" value="1"/>
</dbReference>
<dbReference type="InterPro" id="IPR029028">
    <property type="entry name" value="Alpha/beta_knot_MTases"/>
</dbReference>
<dbReference type="InterPro" id="IPR003742">
    <property type="entry name" value="RlmH-like"/>
</dbReference>
<dbReference type="InterPro" id="IPR029026">
    <property type="entry name" value="tRNA_m1G_MTases_N"/>
</dbReference>
<dbReference type="NCBIfam" id="NF000988">
    <property type="entry name" value="PRK00103.2-2"/>
    <property type="match status" value="1"/>
</dbReference>
<dbReference type="NCBIfam" id="NF000989">
    <property type="entry name" value="PRK00103.2-3"/>
    <property type="match status" value="1"/>
</dbReference>
<dbReference type="PANTHER" id="PTHR33603">
    <property type="entry name" value="METHYLTRANSFERASE"/>
    <property type="match status" value="1"/>
</dbReference>
<dbReference type="PANTHER" id="PTHR33603:SF1">
    <property type="entry name" value="RIBOSOMAL RNA LARGE SUBUNIT METHYLTRANSFERASE H"/>
    <property type="match status" value="1"/>
</dbReference>
<dbReference type="Pfam" id="PF02590">
    <property type="entry name" value="SPOUT_MTase"/>
    <property type="match status" value="1"/>
</dbReference>
<dbReference type="PIRSF" id="PIRSF004505">
    <property type="entry name" value="MT_bac"/>
    <property type="match status" value="1"/>
</dbReference>
<dbReference type="SUPFAM" id="SSF75217">
    <property type="entry name" value="alpha/beta knot"/>
    <property type="match status" value="1"/>
</dbReference>
<accession>B9KMK8</accession>